<comment type="function">
    <text evidence="3">Involved in uracil catabolism.</text>
</comment>
<comment type="subcellular location">
    <subcellularLocation>
        <location evidence="1">Cytoplasm</location>
    </subcellularLocation>
    <subcellularLocation>
        <location evidence="1">Nucleus</location>
    </subcellularLocation>
</comment>
<comment type="similarity">
    <text evidence="4">Belongs to the GTP cyclohydrolase II family.</text>
</comment>
<accession>Q6YFE5</accession>
<organism>
    <name type="scientific">Lachancea kluyveri</name>
    <name type="common">Yeast</name>
    <name type="synonym">Saccharomyces kluyveri</name>
    <dbReference type="NCBI Taxonomy" id="4934"/>
    <lineage>
        <taxon>Eukaryota</taxon>
        <taxon>Fungi</taxon>
        <taxon>Dikarya</taxon>
        <taxon>Ascomycota</taxon>
        <taxon>Saccharomycotina</taxon>
        <taxon>Saccharomycetes</taxon>
        <taxon>Saccharomycetales</taxon>
        <taxon>Saccharomycetaceae</taxon>
        <taxon>Lachancea</taxon>
    </lineage>
</organism>
<name>URC1_LACKL</name>
<gene>
    <name type="primary">URC1</name>
</gene>
<evidence type="ECO:0000250" key="1"/>
<evidence type="ECO:0000255" key="2"/>
<evidence type="ECO:0000269" key="3">
    <source>
    </source>
</evidence>
<evidence type="ECO:0000305" key="4"/>
<proteinExistence type="inferred from homology"/>
<keyword id="KW-0963">Cytoplasm</keyword>
<keyword id="KW-0342">GTP-binding</keyword>
<keyword id="KW-0378">Hydrolase</keyword>
<keyword id="KW-0479">Metal-binding</keyword>
<keyword id="KW-0547">Nucleotide-binding</keyword>
<keyword id="KW-0539">Nucleus</keyword>
<keyword id="KW-0862">Zinc</keyword>
<sequence>MSPIAVTSQTPATEVPSVKEIPQVITKSSPVENLILTTYPEDSSPIPLQWGAPSTDSRGPIIATRYKEGLAKHNAIGAHSGSYCVYHALAVGTKQLDPEHVADYTNSQPAFAVPEQKTWYNDEDIVAMDPFGHLTPYLFDEVSTKENVEIRPTIAVTKATMQLFEMKDAVEKGRLEVDGEVVINKNGDLNVSKVAVEPVWYLPGVAKRFGVTEEELRKALFEDTNGMYPELVTRPDIKVFLPPIGGLTVYIFGNPDFVSDPSKKLALRVHDECNGSDVFGSDICTCRPYLMFGIEEAVKEAQNGGSGVVVYFRKEGRALGEVTKYLVYNARKRGGDTADEYFHRTECIAGVRDMRFQQLMPDVLKWLGISKIDRMLSMSNMKHDAIVDQGIPIIERIPIPDELVPPDSRVEIDAKINSGYFTNGKVMDKNELKSVQGRTWNDVK</sequence>
<feature type="chain" id="PRO_0000367270" description="Putative GTP cyclohydrolase URC1">
    <location>
        <begin position="1"/>
        <end position="444"/>
    </location>
</feature>
<feature type="active site" description="Proton acceptor" evidence="2">
    <location>
        <position position="353"/>
    </location>
</feature>
<feature type="active site" description="Nucleophile" evidence="1">
    <location>
        <position position="355"/>
    </location>
</feature>
<feature type="binding site" evidence="1">
    <location>
        <begin position="268"/>
        <end position="272"/>
    </location>
    <ligand>
        <name>GTP</name>
        <dbReference type="ChEBI" id="CHEBI:37565"/>
    </ligand>
</feature>
<feature type="binding site" evidence="1">
    <location>
        <position position="273"/>
    </location>
    <ligand>
        <name>Zn(2+)</name>
        <dbReference type="ChEBI" id="CHEBI:29105"/>
        <note>catalytic</note>
    </ligand>
</feature>
<feature type="binding site" evidence="1">
    <location>
        <position position="284"/>
    </location>
    <ligand>
        <name>Zn(2+)</name>
        <dbReference type="ChEBI" id="CHEBI:29105"/>
        <note>catalytic</note>
    </ligand>
</feature>
<feature type="binding site" evidence="1">
    <location>
        <position position="286"/>
    </location>
    <ligand>
        <name>Zn(2+)</name>
        <dbReference type="ChEBI" id="CHEBI:29105"/>
        <note>catalytic</note>
    </ligand>
</feature>
<feature type="binding site" evidence="1">
    <location>
        <begin position="315"/>
        <end position="317"/>
    </location>
    <ligand>
        <name>GTP</name>
        <dbReference type="ChEBI" id="CHEBI:37565"/>
    </ligand>
</feature>
<feature type="binding site" evidence="1">
    <location>
        <position position="377"/>
    </location>
    <ligand>
        <name>GTP</name>
        <dbReference type="ChEBI" id="CHEBI:37565"/>
    </ligand>
</feature>
<feature type="binding site" evidence="1">
    <location>
        <position position="382"/>
    </location>
    <ligand>
        <name>GTP</name>
        <dbReference type="ChEBI" id="CHEBI:37565"/>
    </ligand>
</feature>
<protein>
    <recommendedName>
        <fullName>Putative GTP cyclohydrolase URC1</fullName>
    </recommendedName>
    <alternativeName>
        <fullName>Uracil catabolism protein 1</fullName>
        <ecNumber>3.5.4.-</ecNumber>
    </alternativeName>
</protein>
<reference key="1">
    <citation type="journal article" date="2008" name="J. Mol. Biol.">
        <title>A second pathway to degrade pyrimidine nucleic acid precursors in eukaryotes.</title>
        <authorList>
            <person name="Andersen G."/>
            <person name="Bjoernberg O."/>
            <person name="Polakova S."/>
            <person name="Pynyaha Y."/>
            <person name="Rasmussen A."/>
            <person name="Moeller K."/>
            <person name="Hofer A."/>
            <person name="Moritz T."/>
            <person name="Sandrini M.P."/>
            <person name="Merico A.M."/>
            <person name="Compagno C."/>
            <person name="Aekerlund H.E."/>
            <person name="Gojkovic Z."/>
            <person name="Piskur J."/>
        </authorList>
    </citation>
    <scope>NUCLEOTIDE SEQUENCE [GENOMIC DNA]</scope>
    <scope>FUNCTION</scope>
</reference>
<dbReference type="EC" id="3.5.4.-"/>
<dbReference type="EMBL" id="AY154654">
    <property type="protein sequence ID" value="AAO06876.1"/>
    <property type="molecule type" value="Genomic_DNA"/>
</dbReference>
<dbReference type="SMR" id="Q6YFE5"/>
<dbReference type="GO" id="GO:0005737">
    <property type="term" value="C:cytoplasm"/>
    <property type="evidence" value="ECO:0007669"/>
    <property type="project" value="UniProtKB-SubCell"/>
</dbReference>
<dbReference type="GO" id="GO:0005634">
    <property type="term" value="C:nucleus"/>
    <property type="evidence" value="ECO:0007669"/>
    <property type="project" value="UniProtKB-SubCell"/>
</dbReference>
<dbReference type="GO" id="GO:0005525">
    <property type="term" value="F:GTP binding"/>
    <property type="evidence" value="ECO:0007669"/>
    <property type="project" value="UniProtKB-KW"/>
</dbReference>
<dbReference type="GO" id="GO:0003935">
    <property type="term" value="F:GTP cyclohydrolase II activity"/>
    <property type="evidence" value="ECO:0007669"/>
    <property type="project" value="InterPro"/>
</dbReference>
<dbReference type="GO" id="GO:0046872">
    <property type="term" value="F:metal ion binding"/>
    <property type="evidence" value="ECO:0007669"/>
    <property type="project" value="UniProtKB-KW"/>
</dbReference>
<dbReference type="GO" id="GO:0009231">
    <property type="term" value="P:riboflavin biosynthetic process"/>
    <property type="evidence" value="ECO:0007669"/>
    <property type="project" value="InterPro"/>
</dbReference>
<dbReference type="CDD" id="cd00641">
    <property type="entry name" value="GTP_cyclohydro2"/>
    <property type="match status" value="1"/>
</dbReference>
<dbReference type="Gene3D" id="3.40.50.10990">
    <property type="entry name" value="GTP cyclohydrolase II"/>
    <property type="match status" value="1"/>
</dbReference>
<dbReference type="InterPro" id="IPR022163">
    <property type="entry name" value="GTP_CH_N"/>
</dbReference>
<dbReference type="InterPro" id="IPR032677">
    <property type="entry name" value="GTP_cyclohydro_II"/>
</dbReference>
<dbReference type="InterPro" id="IPR000926">
    <property type="entry name" value="RibA"/>
</dbReference>
<dbReference type="InterPro" id="IPR036144">
    <property type="entry name" value="RibA-like_sf"/>
</dbReference>
<dbReference type="NCBIfam" id="NF005536">
    <property type="entry name" value="PRK07198.1"/>
    <property type="match status" value="1"/>
</dbReference>
<dbReference type="PANTHER" id="PTHR47259">
    <property type="match status" value="1"/>
</dbReference>
<dbReference type="PANTHER" id="PTHR47259:SF2">
    <property type="entry name" value="URACIL-REGULATED PROTEIN 1"/>
    <property type="match status" value="1"/>
</dbReference>
<dbReference type="Pfam" id="PF12471">
    <property type="entry name" value="GTP_CH_N"/>
    <property type="match status" value="1"/>
</dbReference>
<dbReference type="Pfam" id="PF00925">
    <property type="entry name" value="GTP_cyclohydro2"/>
    <property type="match status" value="1"/>
</dbReference>
<dbReference type="SUPFAM" id="SSF142695">
    <property type="entry name" value="RibA-like"/>
    <property type="match status" value="1"/>
</dbReference>